<evidence type="ECO:0000255" key="1">
    <source>
        <dbReference type="HAMAP-Rule" id="MF_00402"/>
    </source>
</evidence>
<evidence type="ECO:0000305" key="2"/>
<name>RL19_PSEA8</name>
<dbReference type="EMBL" id="FM209186">
    <property type="protein sequence ID" value="CAW25965.1"/>
    <property type="molecule type" value="Genomic_DNA"/>
</dbReference>
<dbReference type="RefSeq" id="WP_003092637.1">
    <property type="nucleotide sequence ID" value="NC_011770.1"/>
</dbReference>
<dbReference type="SMR" id="B7UZM0"/>
<dbReference type="GeneID" id="77219764"/>
<dbReference type="KEGG" id="pag:PLES_12381"/>
<dbReference type="HOGENOM" id="CLU_103507_2_1_6"/>
<dbReference type="GO" id="GO:0022625">
    <property type="term" value="C:cytosolic large ribosomal subunit"/>
    <property type="evidence" value="ECO:0007669"/>
    <property type="project" value="TreeGrafter"/>
</dbReference>
<dbReference type="GO" id="GO:0003735">
    <property type="term" value="F:structural constituent of ribosome"/>
    <property type="evidence" value="ECO:0007669"/>
    <property type="project" value="InterPro"/>
</dbReference>
<dbReference type="GO" id="GO:0006412">
    <property type="term" value="P:translation"/>
    <property type="evidence" value="ECO:0007669"/>
    <property type="project" value="UniProtKB-UniRule"/>
</dbReference>
<dbReference type="FunFam" id="2.30.30.790:FF:000001">
    <property type="entry name" value="50S ribosomal protein L19"/>
    <property type="match status" value="1"/>
</dbReference>
<dbReference type="Gene3D" id="2.30.30.790">
    <property type="match status" value="1"/>
</dbReference>
<dbReference type="HAMAP" id="MF_00402">
    <property type="entry name" value="Ribosomal_bL19"/>
    <property type="match status" value="1"/>
</dbReference>
<dbReference type="InterPro" id="IPR001857">
    <property type="entry name" value="Ribosomal_bL19"/>
</dbReference>
<dbReference type="InterPro" id="IPR018257">
    <property type="entry name" value="Ribosomal_bL19_CS"/>
</dbReference>
<dbReference type="InterPro" id="IPR038657">
    <property type="entry name" value="Ribosomal_bL19_sf"/>
</dbReference>
<dbReference type="InterPro" id="IPR008991">
    <property type="entry name" value="Translation_prot_SH3-like_sf"/>
</dbReference>
<dbReference type="NCBIfam" id="TIGR01024">
    <property type="entry name" value="rplS_bact"/>
    <property type="match status" value="1"/>
</dbReference>
<dbReference type="PANTHER" id="PTHR15680:SF9">
    <property type="entry name" value="LARGE RIBOSOMAL SUBUNIT PROTEIN BL19M"/>
    <property type="match status" value="1"/>
</dbReference>
<dbReference type="PANTHER" id="PTHR15680">
    <property type="entry name" value="RIBOSOMAL PROTEIN L19"/>
    <property type="match status" value="1"/>
</dbReference>
<dbReference type="Pfam" id="PF01245">
    <property type="entry name" value="Ribosomal_L19"/>
    <property type="match status" value="1"/>
</dbReference>
<dbReference type="PIRSF" id="PIRSF002191">
    <property type="entry name" value="Ribosomal_L19"/>
    <property type="match status" value="1"/>
</dbReference>
<dbReference type="PRINTS" id="PR00061">
    <property type="entry name" value="RIBOSOMALL19"/>
</dbReference>
<dbReference type="SUPFAM" id="SSF50104">
    <property type="entry name" value="Translation proteins SH3-like domain"/>
    <property type="match status" value="1"/>
</dbReference>
<dbReference type="PROSITE" id="PS01015">
    <property type="entry name" value="RIBOSOMAL_L19"/>
    <property type="match status" value="1"/>
</dbReference>
<gene>
    <name evidence="1" type="primary">rplS</name>
    <name type="ordered locus">PLES_12381</name>
</gene>
<reference key="1">
    <citation type="journal article" date="2009" name="Genome Res.">
        <title>Newly introduced genomic prophage islands are critical determinants of in vivo competitiveness in the Liverpool epidemic strain of Pseudomonas aeruginosa.</title>
        <authorList>
            <person name="Winstanley C."/>
            <person name="Langille M.G.I."/>
            <person name="Fothergill J.L."/>
            <person name="Kukavica-Ibrulj I."/>
            <person name="Paradis-Bleau C."/>
            <person name="Sanschagrin F."/>
            <person name="Thomson N.R."/>
            <person name="Winsor G.L."/>
            <person name="Quail M.A."/>
            <person name="Lennard N."/>
            <person name="Bignell A."/>
            <person name="Clarke L."/>
            <person name="Seeger K."/>
            <person name="Saunders D."/>
            <person name="Harris D."/>
            <person name="Parkhill J."/>
            <person name="Hancock R.E.W."/>
            <person name="Brinkman F.S.L."/>
            <person name="Levesque R.C."/>
        </authorList>
    </citation>
    <scope>NUCLEOTIDE SEQUENCE [LARGE SCALE GENOMIC DNA]</scope>
    <source>
        <strain>LESB58</strain>
    </source>
</reference>
<comment type="function">
    <text evidence="1">This protein is located at the 30S-50S ribosomal subunit interface and may play a role in the structure and function of the aminoacyl-tRNA binding site.</text>
</comment>
<comment type="similarity">
    <text evidence="1">Belongs to the bacterial ribosomal protein bL19 family.</text>
</comment>
<accession>B7UZM0</accession>
<organism>
    <name type="scientific">Pseudomonas aeruginosa (strain LESB58)</name>
    <dbReference type="NCBI Taxonomy" id="557722"/>
    <lineage>
        <taxon>Bacteria</taxon>
        <taxon>Pseudomonadati</taxon>
        <taxon>Pseudomonadota</taxon>
        <taxon>Gammaproteobacteria</taxon>
        <taxon>Pseudomonadales</taxon>
        <taxon>Pseudomonadaceae</taxon>
        <taxon>Pseudomonas</taxon>
    </lineage>
</organism>
<sequence>MTNKIIQQIEAEQMNKEIPAFAPGDTVIVQVKVKEGDRQRLQAFEGVVIAKRNRGLNSAFTVRKISNGVGVERTFQTYSPIVDSLSVKRRGDVRKAKLYYLRALSGKAARIKEKLV</sequence>
<protein>
    <recommendedName>
        <fullName evidence="1">Large ribosomal subunit protein bL19</fullName>
    </recommendedName>
    <alternativeName>
        <fullName evidence="2">50S ribosomal protein L19</fullName>
    </alternativeName>
</protein>
<keyword id="KW-0687">Ribonucleoprotein</keyword>
<keyword id="KW-0689">Ribosomal protein</keyword>
<feature type="chain" id="PRO_1000123357" description="Large ribosomal subunit protein bL19">
    <location>
        <begin position="1"/>
        <end position="116"/>
    </location>
</feature>
<proteinExistence type="inferred from homology"/>